<evidence type="ECO:0000250" key="1"/>
<evidence type="ECO:0000305" key="2"/>
<organism>
    <name type="scientific">Dictyostelium discoideum</name>
    <name type="common">Social amoeba</name>
    <dbReference type="NCBI Taxonomy" id="44689"/>
    <lineage>
        <taxon>Eukaryota</taxon>
        <taxon>Amoebozoa</taxon>
        <taxon>Evosea</taxon>
        <taxon>Eumycetozoa</taxon>
        <taxon>Dictyostelia</taxon>
        <taxon>Dictyosteliales</taxon>
        <taxon>Dictyosteliaceae</taxon>
        <taxon>Dictyostelium</taxon>
    </lineage>
</organism>
<feature type="chain" id="PRO_0000327829" description="RuvB-like helicase 2">
    <location>
        <begin position="1"/>
        <end position="469"/>
    </location>
</feature>
<feature type="binding site" evidence="1">
    <location>
        <begin position="73"/>
        <end position="80"/>
    </location>
    <ligand>
        <name>ATP</name>
        <dbReference type="ChEBI" id="CHEBI:30616"/>
    </ligand>
</feature>
<keyword id="KW-0067">ATP-binding</keyword>
<keyword id="KW-0903">Direct protein sequencing</keyword>
<keyword id="KW-0227">DNA damage</keyword>
<keyword id="KW-0233">DNA recombination</keyword>
<keyword id="KW-0234">DNA repair</keyword>
<keyword id="KW-0347">Helicase</keyword>
<keyword id="KW-0378">Hydrolase</keyword>
<keyword id="KW-0547">Nucleotide-binding</keyword>
<keyword id="KW-0539">Nucleus</keyword>
<keyword id="KW-1185">Reference proteome</keyword>
<keyword id="KW-0804">Transcription</keyword>
<keyword id="KW-0805">Transcription regulation</keyword>
<protein>
    <recommendedName>
        <fullName>RuvB-like helicase 2</fullName>
        <ecNumber>3.6.4.12</ecNumber>
    </recommendedName>
</protein>
<name>RUVB2_DICDI</name>
<proteinExistence type="evidence at protein level"/>
<comment type="function">
    <text evidence="1">Has double-stranded DNA-stimulated ATPase and ATP-dependent DNA helicase (5' to 3') activity suggesting a role in nuclear processes such as recombination and transcription.</text>
</comment>
<comment type="function">
    <text evidence="1">Proposed core component of the chromatin remodeling Ino80 complex which is involved in transcriptional regulation, DNA replication and probably DNA repair.</text>
</comment>
<comment type="catalytic activity">
    <reaction>
        <text>ATP + H2O = ADP + phosphate + H(+)</text>
        <dbReference type="Rhea" id="RHEA:13065"/>
        <dbReference type="ChEBI" id="CHEBI:15377"/>
        <dbReference type="ChEBI" id="CHEBI:15378"/>
        <dbReference type="ChEBI" id="CHEBI:30616"/>
        <dbReference type="ChEBI" id="CHEBI:43474"/>
        <dbReference type="ChEBI" id="CHEBI:456216"/>
        <dbReference type="EC" id="3.6.4.12"/>
    </reaction>
</comment>
<comment type="subunit">
    <text evidence="1">Forms homohexameric rings. May form a dodecamer with rvb1 made of two stacked hexameric rings. Component of the chromatin remodeling Ino80 complex. Component of the RNA polymerase II holoenzyme complex (By similarity).</text>
</comment>
<comment type="subcellular location">
    <subcellularLocation>
        <location evidence="1">Nucleus</location>
    </subcellularLocation>
</comment>
<comment type="similarity">
    <text evidence="2">Belongs to the RuvB family.</text>
</comment>
<sequence>MSIPKISQVKDLTRIERIGAHSHIRGLGIDDSLEPREISQGMVGQVGARKAAGLILQMIKEGKIAGRAILIGGEPGTGKTAIAMGMAQSLGEKTPFTAIAASEIFSLEMSKTEALTQAFRRSIGVRIKEETEVICGEVVDIQIDRPATGSGAKVGKLTLKTTSMDALYDLGAKMIDSLTKEKVQNGDIIRIDKGTGKITKLGRSLSRVRDHEISGSKVNFIECPEGEIQQRRTETHTVSLHEIDVINSRAQGFFALFAGDIGEIKSEVREQINQKVAEWKEEGKAEIVPGVLFIDEVHMLDIECFSYLNRALEDDMSPILIIATNRGNTTIRGTDYKAPHGIPLDLLDRLLIINTQPYTEKDIYKILKIRCEEEDVDIQEDALQLLTKIGVETSLRYAIHLITSSSLVSVKRKGTDVSVDDIKKVYDLFVDVKRSTKYLKDYQDEYLYNSQPETTATKTNEEQQTMQTA</sequence>
<dbReference type="EC" id="3.6.4.12"/>
<dbReference type="EMBL" id="AAFI02000038">
    <property type="protein sequence ID" value="EAL67045.1"/>
    <property type="molecule type" value="Genomic_DNA"/>
</dbReference>
<dbReference type="RefSeq" id="XP_641022.1">
    <property type="nucleotide sequence ID" value="XM_635930.1"/>
</dbReference>
<dbReference type="SMR" id="Q54UW5"/>
<dbReference type="FunCoup" id="Q54UW5">
    <property type="interactions" value="827"/>
</dbReference>
<dbReference type="STRING" id="44689.Q54UW5"/>
<dbReference type="PaxDb" id="44689-DDB0233014"/>
<dbReference type="EnsemblProtists" id="EAL67045">
    <property type="protein sequence ID" value="EAL67045"/>
    <property type="gene ID" value="DDB_G0280775"/>
</dbReference>
<dbReference type="GeneID" id="8622724"/>
<dbReference type="KEGG" id="ddi:DDB_G0280775"/>
<dbReference type="dictyBase" id="DDB_G0280775">
    <property type="gene designation" value="rvb2"/>
</dbReference>
<dbReference type="VEuPathDB" id="AmoebaDB:DDB_G0280775"/>
<dbReference type="eggNOG" id="KOG2680">
    <property type="taxonomic scope" value="Eukaryota"/>
</dbReference>
<dbReference type="HOGENOM" id="CLU_028311_4_0_1"/>
<dbReference type="InParanoid" id="Q54UW5"/>
<dbReference type="OMA" id="IINTEPY"/>
<dbReference type="PhylomeDB" id="Q54UW5"/>
<dbReference type="PRO" id="PR:Q54UW5"/>
<dbReference type="Proteomes" id="UP000002195">
    <property type="component" value="Chromosome 3"/>
</dbReference>
<dbReference type="GO" id="GO:0031011">
    <property type="term" value="C:Ino80 complex"/>
    <property type="evidence" value="ECO:0000250"/>
    <property type="project" value="dictyBase"/>
</dbReference>
<dbReference type="GO" id="GO:0035267">
    <property type="term" value="C:NuA4 histone acetyltransferase complex"/>
    <property type="evidence" value="ECO:0000318"/>
    <property type="project" value="GO_Central"/>
</dbReference>
<dbReference type="GO" id="GO:0097255">
    <property type="term" value="C:R2TP complex"/>
    <property type="evidence" value="ECO:0000318"/>
    <property type="project" value="GO_Central"/>
</dbReference>
<dbReference type="GO" id="GO:0000812">
    <property type="term" value="C:Swr1 complex"/>
    <property type="evidence" value="ECO:0000250"/>
    <property type="project" value="dictyBase"/>
</dbReference>
<dbReference type="GO" id="GO:0043138">
    <property type="term" value="F:3'-5' DNA helicase activity"/>
    <property type="evidence" value="ECO:0000250"/>
    <property type="project" value="dictyBase"/>
</dbReference>
<dbReference type="GO" id="GO:0005524">
    <property type="term" value="F:ATP binding"/>
    <property type="evidence" value="ECO:0007669"/>
    <property type="project" value="UniProtKB-KW"/>
</dbReference>
<dbReference type="GO" id="GO:0016887">
    <property type="term" value="F:ATP hydrolysis activity"/>
    <property type="evidence" value="ECO:0007669"/>
    <property type="project" value="InterPro"/>
</dbReference>
<dbReference type="GO" id="GO:0003678">
    <property type="term" value="F:DNA helicase activity"/>
    <property type="evidence" value="ECO:0000318"/>
    <property type="project" value="GO_Central"/>
</dbReference>
<dbReference type="GO" id="GO:0000492">
    <property type="term" value="P:box C/D snoRNP assembly"/>
    <property type="evidence" value="ECO:0000318"/>
    <property type="project" value="GO_Central"/>
</dbReference>
<dbReference type="GO" id="GO:0006338">
    <property type="term" value="P:chromatin remodeling"/>
    <property type="evidence" value="ECO:0000250"/>
    <property type="project" value="dictyBase"/>
</dbReference>
<dbReference type="GO" id="GO:0006310">
    <property type="term" value="P:DNA recombination"/>
    <property type="evidence" value="ECO:0007669"/>
    <property type="project" value="UniProtKB-KW"/>
</dbReference>
<dbReference type="GO" id="GO:0006281">
    <property type="term" value="P:DNA repair"/>
    <property type="evidence" value="ECO:0007669"/>
    <property type="project" value="UniProtKB-KW"/>
</dbReference>
<dbReference type="GO" id="GO:0006357">
    <property type="term" value="P:regulation of transcription by RNA polymerase II"/>
    <property type="evidence" value="ECO:0000250"/>
    <property type="project" value="dictyBase"/>
</dbReference>
<dbReference type="FunFam" id="3.40.50.300:FF:002221">
    <property type="entry name" value="RuvB-like 2"/>
    <property type="match status" value="2"/>
</dbReference>
<dbReference type="FunFam" id="1.10.8.60:FF:000010">
    <property type="entry name" value="RuvB-like helicase"/>
    <property type="match status" value="1"/>
</dbReference>
<dbReference type="FunFam" id="2.40.50.360:FF:000002">
    <property type="entry name" value="RuvB-like helicase"/>
    <property type="match status" value="1"/>
</dbReference>
<dbReference type="Gene3D" id="1.10.8.60">
    <property type="match status" value="1"/>
</dbReference>
<dbReference type="Gene3D" id="3.40.50.300">
    <property type="entry name" value="P-loop containing nucleotide triphosphate hydrolases"/>
    <property type="match status" value="1"/>
</dbReference>
<dbReference type="Gene3D" id="2.40.50.360">
    <property type="entry name" value="RuvB-like helicase, domain II"/>
    <property type="match status" value="1"/>
</dbReference>
<dbReference type="InterPro" id="IPR003593">
    <property type="entry name" value="AAA+_ATPase"/>
</dbReference>
<dbReference type="InterPro" id="IPR012340">
    <property type="entry name" value="NA-bd_OB-fold"/>
</dbReference>
<dbReference type="InterPro" id="IPR027417">
    <property type="entry name" value="P-loop_NTPase"/>
</dbReference>
<dbReference type="InterPro" id="IPR027238">
    <property type="entry name" value="RuvB-like"/>
</dbReference>
<dbReference type="InterPro" id="IPR041048">
    <property type="entry name" value="RuvB-like_C"/>
</dbReference>
<dbReference type="InterPro" id="IPR042487">
    <property type="entry name" value="RuvBL1/2_DNA/RNA_bd_dom"/>
</dbReference>
<dbReference type="InterPro" id="IPR010339">
    <property type="entry name" value="TIP49_P-loop"/>
</dbReference>
<dbReference type="PANTHER" id="PTHR11093">
    <property type="entry name" value="RUVB-RELATED REPTIN AND PONTIN"/>
    <property type="match status" value="1"/>
</dbReference>
<dbReference type="Pfam" id="PF06068">
    <property type="entry name" value="TIP49"/>
    <property type="match status" value="1"/>
</dbReference>
<dbReference type="Pfam" id="PF17856">
    <property type="entry name" value="TIP49_C"/>
    <property type="match status" value="1"/>
</dbReference>
<dbReference type="SMART" id="SM00382">
    <property type="entry name" value="AAA"/>
    <property type="match status" value="1"/>
</dbReference>
<dbReference type="SUPFAM" id="SSF50249">
    <property type="entry name" value="Nucleic acid-binding proteins"/>
    <property type="match status" value="1"/>
</dbReference>
<dbReference type="SUPFAM" id="SSF52540">
    <property type="entry name" value="P-loop containing nucleoside triphosphate hydrolases"/>
    <property type="match status" value="1"/>
</dbReference>
<accession>Q54UW5</accession>
<reference key="1">
    <citation type="journal article" date="2005" name="Nature">
        <title>The genome of the social amoeba Dictyostelium discoideum.</title>
        <authorList>
            <person name="Eichinger L."/>
            <person name="Pachebat J.A."/>
            <person name="Gloeckner G."/>
            <person name="Rajandream M.A."/>
            <person name="Sucgang R."/>
            <person name="Berriman M."/>
            <person name="Song J."/>
            <person name="Olsen R."/>
            <person name="Szafranski K."/>
            <person name="Xu Q."/>
            <person name="Tunggal B."/>
            <person name="Kummerfeld S."/>
            <person name="Madera M."/>
            <person name="Konfortov B.A."/>
            <person name="Rivero F."/>
            <person name="Bankier A.T."/>
            <person name="Lehmann R."/>
            <person name="Hamlin N."/>
            <person name="Davies R."/>
            <person name="Gaudet P."/>
            <person name="Fey P."/>
            <person name="Pilcher K."/>
            <person name="Chen G."/>
            <person name="Saunders D."/>
            <person name="Sodergren E.J."/>
            <person name="Davis P."/>
            <person name="Kerhornou A."/>
            <person name="Nie X."/>
            <person name="Hall N."/>
            <person name="Anjard C."/>
            <person name="Hemphill L."/>
            <person name="Bason N."/>
            <person name="Farbrother P."/>
            <person name="Desany B."/>
            <person name="Just E."/>
            <person name="Morio T."/>
            <person name="Rost R."/>
            <person name="Churcher C.M."/>
            <person name="Cooper J."/>
            <person name="Haydock S."/>
            <person name="van Driessche N."/>
            <person name="Cronin A."/>
            <person name="Goodhead I."/>
            <person name="Muzny D.M."/>
            <person name="Mourier T."/>
            <person name="Pain A."/>
            <person name="Lu M."/>
            <person name="Harper D."/>
            <person name="Lindsay R."/>
            <person name="Hauser H."/>
            <person name="James K.D."/>
            <person name="Quiles M."/>
            <person name="Madan Babu M."/>
            <person name="Saito T."/>
            <person name="Buchrieser C."/>
            <person name="Wardroper A."/>
            <person name="Felder M."/>
            <person name="Thangavelu M."/>
            <person name="Johnson D."/>
            <person name="Knights A."/>
            <person name="Loulseged H."/>
            <person name="Mungall K.L."/>
            <person name="Oliver K."/>
            <person name="Price C."/>
            <person name="Quail M.A."/>
            <person name="Urushihara H."/>
            <person name="Hernandez J."/>
            <person name="Rabbinowitsch E."/>
            <person name="Steffen D."/>
            <person name="Sanders M."/>
            <person name="Ma J."/>
            <person name="Kohara Y."/>
            <person name="Sharp S."/>
            <person name="Simmonds M.N."/>
            <person name="Spiegler S."/>
            <person name="Tivey A."/>
            <person name="Sugano S."/>
            <person name="White B."/>
            <person name="Walker D."/>
            <person name="Woodward J.R."/>
            <person name="Winckler T."/>
            <person name="Tanaka Y."/>
            <person name="Shaulsky G."/>
            <person name="Schleicher M."/>
            <person name="Weinstock G.M."/>
            <person name="Rosenthal A."/>
            <person name="Cox E.C."/>
            <person name="Chisholm R.L."/>
            <person name="Gibbs R.A."/>
            <person name="Loomis W.F."/>
            <person name="Platzer M."/>
            <person name="Kay R.R."/>
            <person name="Williams J.G."/>
            <person name="Dear P.H."/>
            <person name="Noegel A.A."/>
            <person name="Barrell B.G."/>
            <person name="Kuspa A."/>
        </authorList>
    </citation>
    <scope>NUCLEOTIDE SEQUENCE [LARGE SCALE GENOMIC DNA]</scope>
    <source>
        <strain>AX4</strain>
    </source>
</reference>
<reference key="2">
    <citation type="submission" date="2010-01" db="UniProtKB">
        <authorList>
            <person name="Bienvenut W.V."/>
            <person name="Veltman D.M."/>
            <person name="Insall R.H."/>
        </authorList>
    </citation>
    <scope>PROTEIN SEQUENCE OF 26-49; 68-93; 161-173; 389-396 AND 425-434</scope>
    <scope>IDENTIFICATION BY MASS SPECTROMETRY</scope>
</reference>
<gene>
    <name type="primary">rvb2</name>
    <name type="ORF">DDB_G0280775</name>
</gene>